<reference key="1">
    <citation type="submission" date="2008-02" db="EMBL/GenBank/DDBJ databases">
        <title>Complete sequence of chromosome 2 of Burkholderia cenocepacia MC0-3.</title>
        <authorList>
            <person name="Copeland A."/>
            <person name="Lucas S."/>
            <person name="Lapidus A."/>
            <person name="Barry K."/>
            <person name="Bruce D."/>
            <person name="Goodwin L."/>
            <person name="Glavina del Rio T."/>
            <person name="Dalin E."/>
            <person name="Tice H."/>
            <person name="Pitluck S."/>
            <person name="Chain P."/>
            <person name="Malfatti S."/>
            <person name="Shin M."/>
            <person name="Vergez L."/>
            <person name="Schmutz J."/>
            <person name="Larimer F."/>
            <person name="Land M."/>
            <person name="Hauser L."/>
            <person name="Kyrpides N."/>
            <person name="Mikhailova N."/>
            <person name="Tiedje J."/>
            <person name="Richardson P."/>
        </authorList>
    </citation>
    <scope>NUCLEOTIDE SEQUENCE [LARGE SCALE GENOMIC DNA]</scope>
    <source>
        <strain>MC0-3</strain>
    </source>
</reference>
<dbReference type="EC" id="6.3.1.5" evidence="1"/>
<dbReference type="EMBL" id="CP000959">
    <property type="protein sequence ID" value="ACA94120.1"/>
    <property type="molecule type" value="Genomic_DNA"/>
</dbReference>
<dbReference type="RefSeq" id="WP_011546918.1">
    <property type="nucleotide sequence ID" value="NC_010515.1"/>
</dbReference>
<dbReference type="SMR" id="B1K5T6"/>
<dbReference type="GeneID" id="83051699"/>
<dbReference type="KEGG" id="bcm:Bcenmc03_4990"/>
<dbReference type="HOGENOM" id="CLU_059327_3_0_4"/>
<dbReference type="UniPathway" id="UPA00253">
    <property type="reaction ID" value="UER00333"/>
</dbReference>
<dbReference type="Proteomes" id="UP000002169">
    <property type="component" value="Chromosome 2"/>
</dbReference>
<dbReference type="GO" id="GO:0005737">
    <property type="term" value="C:cytoplasm"/>
    <property type="evidence" value="ECO:0007669"/>
    <property type="project" value="InterPro"/>
</dbReference>
<dbReference type="GO" id="GO:0005524">
    <property type="term" value="F:ATP binding"/>
    <property type="evidence" value="ECO:0007669"/>
    <property type="project" value="UniProtKB-UniRule"/>
</dbReference>
<dbReference type="GO" id="GO:0004359">
    <property type="term" value="F:glutaminase activity"/>
    <property type="evidence" value="ECO:0007669"/>
    <property type="project" value="InterPro"/>
</dbReference>
<dbReference type="GO" id="GO:0046872">
    <property type="term" value="F:metal ion binding"/>
    <property type="evidence" value="ECO:0007669"/>
    <property type="project" value="UniProtKB-KW"/>
</dbReference>
<dbReference type="GO" id="GO:0003952">
    <property type="term" value="F:NAD+ synthase (glutamine-hydrolyzing) activity"/>
    <property type="evidence" value="ECO:0007669"/>
    <property type="project" value="InterPro"/>
</dbReference>
<dbReference type="GO" id="GO:0008795">
    <property type="term" value="F:NAD+ synthase activity"/>
    <property type="evidence" value="ECO:0007669"/>
    <property type="project" value="UniProtKB-UniRule"/>
</dbReference>
<dbReference type="GO" id="GO:0009435">
    <property type="term" value="P:NAD biosynthetic process"/>
    <property type="evidence" value="ECO:0007669"/>
    <property type="project" value="UniProtKB-UniRule"/>
</dbReference>
<dbReference type="CDD" id="cd00553">
    <property type="entry name" value="NAD_synthase"/>
    <property type="match status" value="1"/>
</dbReference>
<dbReference type="Gene3D" id="3.40.50.620">
    <property type="entry name" value="HUPs"/>
    <property type="match status" value="1"/>
</dbReference>
<dbReference type="HAMAP" id="MF_00193">
    <property type="entry name" value="NadE_ammonia_dep"/>
    <property type="match status" value="1"/>
</dbReference>
<dbReference type="InterPro" id="IPR022310">
    <property type="entry name" value="NAD/GMP_synthase"/>
</dbReference>
<dbReference type="InterPro" id="IPR003694">
    <property type="entry name" value="NAD_synthase"/>
</dbReference>
<dbReference type="InterPro" id="IPR022926">
    <property type="entry name" value="NH(3)-dep_NAD(+)_synth"/>
</dbReference>
<dbReference type="InterPro" id="IPR014729">
    <property type="entry name" value="Rossmann-like_a/b/a_fold"/>
</dbReference>
<dbReference type="NCBIfam" id="TIGR00552">
    <property type="entry name" value="nadE"/>
    <property type="match status" value="1"/>
</dbReference>
<dbReference type="NCBIfam" id="NF001979">
    <property type="entry name" value="PRK00768.1"/>
    <property type="match status" value="1"/>
</dbReference>
<dbReference type="PANTHER" id="PTHR23090">
    <property type="entry name" value="NH 3 /GLUTAMINE-DEPENDENT NAD + SYNTHETASE"/>
    <property type="match status" value="1"/>
</dbReference>
<dbReference type="PANTHER" id="PTHR23090:SF7">
    <property type="entry name" value="NH(3)-DEPENDENT NAD(+) SYNTHETASE"/>
    <property type="match status" value="1"/>
</dbReference>
<dbReference type="Pfam" id="PF02540">
    <property type="entry name" value="NAD_synthase"/>
    <property type="match status" value="1"/>
</dbReference>
<dbReference type="SUPFAM" id="SSF52402">
    <property type="entry name" value="Adenine nucleotide alpha hydrolases-like"/>
    <property type="match status" value="1"/>
</dbReference>
<proteinExistence type="inferred from homology"/>
<protein>
    <recommendedName>
        <fullName evidence="1">NH(3)-dependent NAD(+) synthetase</fullName>
        <ecNumber evidence="1">6.3.1.5</ecNumber>
    </recommendedName>
</protein>
<keyword id="KW-0067">ATP-binding</keyword>
<keyword id="KW-0436">Ligase</keyword>
<keyword id="KW-0460">Magnesium</keyword>
<keyword id="KW-0479">Metal-binding</keyword>
<keyword id="KW-0520">NAD</keyword>
<keyword id="KW-0547">Nucleotide-binding</keyword>
<accession>B1K5T6</accession>
<feature type="chain" id="PRO_1000099003" description="NH(3)-dependent NAD(+) synthetase">
    <location>
        <begin position="1"/>
        <end position="282"/>
    </location>
</feature>
<feature type="binding site" evidence="1">
    <location>
        <begin position="51"/>
        <end position="58"/>
    </location>
    <ligand>
        <name>ATP</name>
        <dbReference type="ChEBI" id="CHEBI:30616"/>
    </ligand>
</feature>
<feature type="binding site" evidence="1">
    <location>
        <position position="57"/>
    </location>
    <ligand>
        <name>Mg(2+)</name>
        <dbReference type="ChEBI" id="CHEBI:18420"/>
    </ligand>
</feature>
<feature type="binding site" evidence="1">
    <location>
        <position position="148"/>
    </location>
    <ligand>
        <name>deamido-NAD(+)</name>
        <dbReference type="ChEBI" id="CHEBI:58437"/>
    </ligand>
</feature>
<feature type="binding site" evidence="1">
    <location>
        <position position="168"/>
    </location>
    <ligand>
        <name>ATP</name>
        <dbReference type="ChEBI" id="CHEBI:30616"/>
    </ligand>
</feature>
<feature type="binding site" evidence="1">
    <location>
        <position position="173"/>
    </location>
    <ligand>
        <name>Mg(2+)</name>
        <dbReference type="ChEBI" id="CHEBI:18420"/>
    </ligand>
</feature>
<feature type="binding site" evidence="1">
    <location>
        <position position="181"/>
    </location>
    <ligand>
        <name>deamido-NAD(+)</name>
        <dbReference type="ChEBI" id="CHEBI:58437"/>
    </ligand>
</feature>
<feature type="binding site" evidence="1">
    <location>
        <position position="188"/>
    </location>
    <ligand>
        <name>deamido-NAD(+)</name>
        <dbReference type="ChEBI" id="CHEBI:58437"/>
    </ligand>
</feature>
<feature type="binding site" evidence="1">
    <location>
        <position position="197"/>
    </location>
    <ligand>
        <name>ATP</name>
        <dbReference type="ChEBI" id="CHEBI:30616"/>
    </ligand>
</feature>
<feature type="binding site" evidence="1">
    <location>
        <position position="219"/>
    </location>
    <ligand>
        <name>ATP</name>
        <dbReference type="ChEBI" id="CHEBI:30616"/>
    </ligand>
</feature>
<feature type="binding site" evidence="1">
    <location>
        <begin position="268"/>
        <end position="269"/>
    </location>
    <ligand>
        <name>deamido-NAD(+)</name>
        <dbReference type="ChEBI" id="CHEBI:58437"/>
    </ligand>
</feature>
<gene>
    <name evidence="1" type="primary">nadE</name>
    <name type="ordered locus">Bcenmc03_4990</name>
</gene>
<name>NADE_BURO0</name>
<evidence type="ECO:0000255" key="1">
    <source>
        <dbReference type="HAMAP-Rule" id="MF_00193"/>
    </source>
</evidence>
<organism>
    <name type="scientific">Burkholderia orbicola (strain MC0-3)</name>
    <dbReference type="NCBI Taxonomy" id="406425"/>
    <lineage>
        <taxon>Bacteria</taxon>
        <taxon>Pseudomonadati</taxon>
        <taxon>Pseudomonadota</taxon>
        <taxon>Betaproteobacteria</taxon>
        <taxon>Burkholderiales</taxon>
        <taxon>Burkholderiaceae</taxon>
        <taxon>Burkholderia</taxon>
        <taxon>Burkholderia cepacia complex</taxon>
        <taxon>Burkholderia orbicola</taxon>
    </lineage>
</organism>
<sequence>MTSADYASRQRAIIAELNVAPHFDAEAEIARRIDFLAQYLRSTGLRTYVLGISGGVDSSTAGRLAQLSVERLRADGYDARFIAMRLPNGVQNDEEDAQRALAFVRADEVLTVDVKPAADAMLRSLVASGHAFETPAQQDFVHGNIKARERMIAQYAVAGARRGIVIGTDHAAESLMGFFTKFGDGGADILPLAGLSKRRVRGVARALGGEELIVMKVPTADLEELRPLRPDEHAYGVTYDEIDDFLEGKPVADRVYETVLRFYDGSRHKRALPYTMFDWPAA</sequence>
<comment type="function">
    <text evidence="1">Catalyzes the ATP-dependent amidation of deamido-NAD to form NAD. Uses ammonia as a nitrogen source.</text>
</comment>
<comment type="catalytic activity">
    <reaction evidence="1">
        <text>deamido-NAD(+) + NH4(+) + ATP = AMP + diphosphate + NAD(+) + H(+)</text>
        <dbReference type="Rhea" id="RHEA:21188"/>
        <dbReference type="ChEBI" id="CHEBI:15378"/>
        <dbReference type="ChEBI" id="CHEBI:28938"/>
        <dbReference type="ChEBI" id="CHEBI:30616"/>
        <dbReference type="ChEBI" id="CHEBI:33019"/>
        <dbReference type="ChEBI" id="CHEBI:57540"/>
        <dbReference type="ChEBI" id="CHEBI:58437"/>
        <dbReference type="ChEBI" id="CHEBI:456215"/>
        <dbReference type="EC" id="6.3.1.5"/>
    </reaction>
</comment>
<comment type="pathway">
    <text evidence="1">Cofactor biosynthesis; NAD(+) biosynthesis; NAD(+) from deamido-NAD(+) (ammonia route): step 1/1.</text>
</comment>
<comment type="subunit">
    <text evidence="1">Homodimer.</text>
</comment>
<comment type="similarity">
    <text evidence="1">Belongs to the NAD synthetase family.</text>
</comment>